<organism>
    <name type="scientific">Aster yellows witches'-broom phytoplasma (strain AYWB)</name>
    <dbReference type="NCBI Taxonomy" id="322098"/>
    <lineage>
        <taxon>Bacteria</taxon>
        <taxon>Bacillati</taxon>
        <taxon>Mycoplasmatota</taxon>
        <taxon>Mollicutes</taxon>
        <taxon>Acholeplasmatales</taxon>
        <taxon>Acholeplasmataceae</taxon>
        <taxon>Candidatus Phytoplasma</taxon>
        <taxon>16SrI (Aster yellows group)</taxon>
    </lineage>
</organism>
<sequence length="217" mass="24917">MILILLGPPGIGKGTQASVLSYILKINHISTGDIFRKNFKENTELGTLSKKFIAQGLLVPDDITNQMIADYLSKDIATKDFLLDGFPRNVLQARFLDDFFKKSHLFLTKVIYFNAGTKDLMKRIAGRRICPECGKVYHIEKIPPKNPGICDKDQKTLIQREDDKPETFLKRLKVFNKETLPLVQYYCEQNQLFEVDGMQTIDQVTKMILEVLETDRK</sequence>
<reference key="1">
    <citation type="journal article" date="2006" name="J. Bacteriol.">
        <title>Living with genome instability: the adaptation of phytoplasmas to diverse environments of their insect and plant hosts.</title>
        <authorList>
            <person name="Bai X."/>
            <person name="Zhang J."/>
            <person name="Ewing A."/>
            <person name="Miller S.A."/>
            <person name="Jancso Radek A."/>
            <person name="Shevchenko D.V."/>
            <person name="Tsukerman K."/>
            <person name="Walunas T."/>
            <person name="Lapidus A."/>
            <person name="Campbell J.W."/>
            <person name="Hogenhout S.A."/>
        </authorList>
    </citation>
    <scope>NUCLEOTIDE SEQUENCE [LARGE SCALE GENOMIC DNA]</scope>
    <source>
        <strain>AYWB</strain>
    </source>
</reference>
<accession>Q2NIX5</accession>
<protein>
    <recommendedName>
        <fullName evidence="1">Adenylate kinase</fullName>
        <shortName evidence="1">AK</shortName>
        <ecNumber evidence="1">2.7.4.3</ecNumber>
    </recommendedName>
    <alternativeName>
        <fullName evidence="1">ATP-AMP transphosphorylase</fullName>
    </alternativeName>
    <alternativeName>
        <fullName evidence="1">ATP:AMP phosphotransferase</fullName>
    </alternativeName>
    <alternativeName>
        <fullName evidence="1">Adenylate monophosphate kinase</fullName>
    </alternativeName>
</protein>
<feature type="chain" id="PRO_1000021709" description="Adenylate kinase">
    <location>
        <begin position="1"/>
        <end position="217"/>
    </location>
</feature>
<feature type="region of interest" description="NMP" evidence="1">
    <location>
        <begin position="30"/>
        <end position="59"/>
    </location>
</feature>
<feature type="region of interest" description="LID" evidence="1">
    <location>
        <begin position="126"/>
        <end position="163"/>
    </location>
</feature>
<feature type="binding site" evidence="1">
    <location>
        <begin position="10"/>
        <end position="15"/>
    </location>
    <ligand>
        <name>ATP</name>
        <dbReference type="ChEBI" id="CHEBI:30616"/>
    </ligand>
</feature>
<feature type="binding site" evidence="1">
    <location>
        <position position="31"/>
    </location>
    <ligand>
        <name>AMP</name>
        <dbReference type="ChEBI" id="CHEBI:456215"/>
    </ligand>
</feature>
<feature type="binding site" evidence="1">
    <location>
        <position position="36"/>
    </location>
    <ligand>
        <name>AMP</name>
        <dbReference type="ChEBI" id="CHEBI:456215"/>
    </ligand>
</feature>
<feature type="binding site" evidence="1">
    <location>
        <begin position="57"/>
        <end position="59"/>
    </location>
    <ligand>
        <name>AMP</name>
        <dbReference type="ChEBI" id="CHEBI:456215"/>
    </ligand>
</feature>
<feature type="binding site" evidence="1">
    <location>
        <begin position="85"/>
        <end position="88"/>
    </location>
    <ligand>
        <name>AMP</name>
        <dbReference type="ChEBI" id="CHEBI:456215"/>
    </ligand>
</feature>
<feature type="binding site" evidence="1">
    <location>
        <position position="92"/>
    </location>
    <ligand>
        <name>AMP</name>
        <dbReference type="ChEBI" id="CHEBI:456215"/>
    </ligand>
</feature>
<feature type="binding site" evidence="1">
    <location>
        <position position="127"/>
    </location>
    <ligand>
        <name>ATP</name>
        <dbReference type="ChEBI" id="CHEBI:30616"/>
    </ligand>
</feature>
<feature type="binding site" evidence="1">
    <location>
        <position position="130"/>
    </location>
    <ligand>
        <name>Zn(2+)</name>
        <dbReference type="ChEBI" id="CHEBI:29105"/>
        <note>structural</note>
    </ligand>
</feature>
<feature type="binding site" evidence="1">
    <location>
        <position position="133"/>
    </location>
    <ligand>
        <name>Zn(2+)</name>
        <dbReference type="ChEBI" id="CHEBI:29105"/>
        <note>structural</note>
    </ligand>
</feature>
<feature type="binding site" evidence="1">
    <location>
        <begin position="136"/>
        <end position="137"/>
    </location>
    <ligand>
        <name>ATP</name>
        <dbReference type="ChEBI" id="CHEBI:30616"/>
    </ligand>
</feature>
<feature type="binding site" evidence="1">
    <location>
        <position position="150"/>
    </location>
    <ligand>
        <name>Zn(2+)</name>
        <dbReference type="ChEBI" id="CHEBI:29105"/>
        <note>structural</note>
    </ligand>
</feature>
<feature type="binding site" evidence="1">
    <location>
        <position position="153"/>
    </location>
    <ligand>
        <name>Zn(2+)</name>
        <dbReference type="ChEBI" id="CHEBI:29105"/>
        <note>structural</note>
    </ligand>
</feature>
<feature type="binding site" evidence="1">
    <location>
        <position position="160"/>
    </location>
    <ligand>
        <name>AMP</name>
        <dbReference type="ChEBI" id="CHEBI:456215"/>
    </ligand>
</feature>
<feature type="binding site" evidence="1">
    <location>
        <position position="171"/>
    </location>
    <ligand>
        <name>AMP</name>
        <dbReference type="ChEBI" id="CHEBI:456215"/>
    </ligand>
</feature>
<feature type="binding site" evidence="1">
    <location>
        <position position="199"/>
    </location>
    <ligand>
        <name>ATP</name>
        <dbReference type="ChEBI" id="CHEBI:30616"/>
    </ligand>
</feature>
<proteinExistence type="inferred from homology"/>
<keyword id="KW-0067">ATP-binding</keyword>
<keyword id="KW-0963">Cytoplasm</keyword>
<keyword id="KW-0418">Kinase</keyword>
<keyword id="KW-0479">Metal-binding</keyword>
<keyword id="KW-0545">Nucleotide biosynthesis</keyword>
<keyword id="KW-0547">Nucleotide-binding</keyword>
<keyword id="KW-0808">Transferase</keyword>
<keyword id="KW-0862">Zinc</keyword>
<name>KAD_AYWBP</name>
<comment type="function">
    <text evidence="1">Catalyzes the reversible transfer of the terminal phosphate group between ATP and AMP. Plays an important role in cellular energy homeostasis and in adenine nucleotide metabolism.</text>
</comment>
<comment type="catalytic activity">
    <reaction evidence="1">
        <text>AMP + ATP = 2 ADP</text>
        <dbReference type="Rhea" id="RHEA:12973"/>
        <dbReference type="ChEBI" id="CHEBI:30616"/>
        <dbReference type="ChEBI" id="CHEBI:456215"/>
        <dbReference type="ChEBI" id="CHEBI:456216"/>
        <dbReference type="EC" id="2.7.4.3"/>
    </reaction>
</comment>
<comment type="pathway">
    <text evidence="1">Purine metabolism; AMP biosynthesis via salvage pathway; AMP from ADP: step 1/1.</text>
</comment>
<comment type="subunit">
    <text evidence="1">Monomer.</text>
</comment>
<comment type="subcellular location">
    <subcellularLocation>
        <location evidence="1">Cytoplasm</location>
    </subcellularLocation>
</comment>
<comment type="domain">
    <text evidence="1">Consists of three domains, a large central CORE domain and two small peripheral domains, NMPbind and LID, which undergo movements during catalysis. The LID domain closes over the site of phosphoryl transfer upon ATP binding. Assembling and dissambling the active center during each catalytic cycle provides an effective means to prevent ATP hydrolysis. Some bacteria have evolved a zinc-coordinating structure that stabilizes the LID domain.</text>
</comment>
<comment type="similarity">
    <text evidence="1">Belongs to the adenylate kinase family.</text>
</comment>
<evidence type="ECO:0000255" key="1">
    <source>
        <dbReference type="HAMAP-Rule" id="MF_00235"/>
    </source>
</evidence>
<dbReference type="EC" id="2.7.4.3" evidence="1"/>
<dbReference type="EMBL" id="CP000061">
    <property type="protein sequence ID" value="ABC65618.1"/>
    <property type="molecule type" value="Genomic_DNA"/>
</dbReference>
<dbReference type="RefSeq" id="WP_011412780.1">
    <property type="nucleotide sequence ID" value="NC_007716.1"/>
</dbReference>
<dbReference type="SMR" id="Q2NIX5"/>
<dbReference type="STRING" id="322098.AYWB_501"/>
<dbReference type="KEGG" id="ayw:AYWB_501"/>
<dbReference type="eggNOG" id="COG0563">
    <property type="taxonomic scope" value="Bacteria"/>
</dbReference>
<dbReference type="HOGENOM" id="CLU_032354_1_2_14"/>
<dbReference type="OrthoDB" id="9805030at2"/>
<dbReference type="PhylomeDB" id="Q2NIX5"/>
<dbReference type="UniPathway" id="UPA00588">
    <property type="reaction ID" value="UER00649"/>
</dbReference>
<dbReference type="Proteomes" id="UP000001934">
    <property type="component" value="Chromosome"/>
</dbReference>
<dbReference type="GO" id="GO:0005737">
    <property type="term" value="C:cytoplasm"/>
    <property type="evidence" value="ECO:0007669"/>
    <property type="project" value="UniProtKB-SubCell"/>
</dbReference>
<dbReference type="GO" id="GO:0004017">
    <property type="term" value="F:adenylate kinase activity"/>
    <property type="evidence" value="ECO:0007669"/>
    <property type="project" value="UniProtKB-UniRule"/>
</dbReference>
<dbReference type="GO" id="GO:0005524">
    <property type="term" value="F:ATP binding"/>
    <property type="evidence" value="ECO:0007669"/>
    <property type="project" value="UniProtKB-UniRule"/>
</dbReference>
<dbReference type="GO" id="GO:0008270">
    <property type="term" value="F:zinc ion binding"/>
    <property type="evidence" value="ECO:0007669"/>
    <property type="project" value="UniProtKB-UniRule"/>
</dbReference>
<dbReference type="GO" id="GO:0044209">
    <property type="term" value="P:AMP salvage"/>
    <property type="evidence" value="ECO:0007669"/>
    <property type="project" value="UniProtKB-UniRule"/>
</dbReference>
<dbReference type="CDD" id="cd01428">
    <property type="entry name" value="ADK"/>
    <property type="match status" value="1"/>
</dbReference>
<dbReference type="FunFam" id="3.40.50.300:FF:000106">
    <property type="entry name" value="Adenylate kinase mitochondrial"/>
    <property type="match status" value="1"/>
</dbReference>
<dbReference type="Gene3D" id="3.40.50.300">
    <property type="entry name" value="P-loop containing nucleotide triphosphate hydrolases"/>
    <property type="match status" value="1"/>
</dbReference>
<dbReference type="HAMAP" id="MF_00235">
    <property type="entry name" value="Adenylate_kinase_Adk"/>
    <property type="match status" value="1"/>
</dbReference>
<dbReference type="InterPro" id="IPR006259">
    <property type="entry name" value="Adenyl_kin_sub"/>
</dbReference>
<dbReference type="InterPro" id="IPR000850">
    <property type="entry name" value="Adenylat/UMP-CMP_kin"/>
</dbReference>
<dbReference type="InterPro" id="IPR033690">
    <property type="entry name" value="Adenylat_kinase_CS"/>
</dbReference>
<dbReference type="InterPro" id="IPR007862">
    <property type="entry name" value="Adenylate_kinase_lid-dom"/>
</dbReference>
<dbReference type="InterPro" id="IPR027417">
    <property type="entry name" value="P-loop_NTPase"/>
</dbReference>
<dbReference type="NCBIfam" id="TIGR01351">
    <property type="entry name" value="adk"/>
    <property type="match status" value="1"/>
</dbReference>
<dbReference type="NCBIfam" id="NF001380">
    <property type="entry name" value="PRK00279.1-2"/>
    <property type="match status" value="1"/>
</dbReference>
<dbReference type="NCBIfam" id="NF001381">
    <property type="entry name" value="PRK00279.1-3"/>
    <property type="match status" value="1"/>
</dbReference>
<dbReference type="PANTHER" id="PTHR23359">
    <property type="entry name" value="NUCLEOTIDE KINASE"/>
    <property type="match status" value="1"/>
</dbReference>
<dbReference type="Pfam" id="PF00406">
    <property type="entry name" value="ADK"/>
    <property type="match status" value="1"/>
</dbReference>
<dbReference type="Pfam" id="PF05191">
    <property type="entry name" value="ADK_lid"/>
    <property type="match status" value="1"/>
</dbReference>
<dbReference type="PRINTS" id="PR00094">
    <property type="entry name" value="ADENYLTKNASE"/>
</dbReference>
<dbReference type="SUPFAM" id="SSF52540">
    <property type="entry name" value="P-loop containing nucleoside triphosphate hydrolases"/>
    <property type="match status" value="1"/>
</dbReference>
<dbReference type="PROSITE" id="PS00113">
    <property type="entry name" value="ADENYLATE_KINASE"/>
    <property type="match status" value="1"/>
</dbReference>
<gene>
    <name evidence="1" type="primary">adk</name>
    <name type="ordered locus">AYWB_501</name>
</gene>